<reference key="1">
    <citation type="journal article" date="2000" name="Nature">
        <title>Sequence and analysis of chromosome 1 of the plant Arabidopsis thaliana.</title>
        <authorList>
            <person name="Theologis A."/>
            <person name="Ecker J.R."/>
            <person name="Palm C.J."/>
            <person name="Federspiel N.A."/>
            <person name="Kaul S."/>
            <person name="White O."/>
            <person name="Alonso J."/>
            <person name="Altafi H."/>
            <person name="Araujo R."/>
            <person name="Bowman C.L."/>
            <person name="Brooks S.Y."/>
            <person name="Buehler E."/>
            <person name="Chan A."/>
            <person name="Chao Q."/>
            <person name="Chen H."/>
            <person name="Cheuk R.F."/>
            <person name="Chin C.W."/>
            <person name="Chung M.K."/>
            <person name="Conn L."/>
            <person name="Conway A.B."/>
            <person name="Conway A.R."/>
            <person name="Creasy T.H."/>
            <person name="Dewar K."/>
            <person name="Dunn P."/>
            <person name="Etgu P."/>
            <person name="Feldblyum T.V."/>
            <person name="Feng J.-D."/>
            <person name="Fong B."/>
            <person name="Fujii C.Y."/>
            <person name="Gill J.E."/>
            <person name="Goldsmith A.D."/>
            <person name="Haas B."/>
            <person name="Hansen N.F."/>
            <person name="Hughes B."/>
            <person name="Huizar L."/>
            <person name="Hunter J.L."/>
            <person name="Jenkins J."/>
            <person name="Johnson-Hopson C."/>
            <person name="Khan S."/>
            <person name="Khaykin E."/>
            <person name="Kim C.J."/>
            <person name="Koo H.L."/>
            <person name="Kremenetskaia I."/>
            <person name="Kurtz D.B."/>
            <person name="Kwan A."/>
            <person name="Lam B."/>
            <person name="Langin-Hooper S."/>
            <person name="Lee A."/>
            <person name="Lee J.M."/>
            <person name="Lenz C.A."/>
            <person name="Li J.H."/>
            <person name="Li Y.-P."/>
            <person name="Lin X."/>
            <person name="Liu S.X."/>
            <person name="Liu Z.A."/>
            <person name="Luros J.S."/>
            <person name="Maiti R."/>
            <person name="Marziali A."/>
            <person name="Militscher J."/>
            <person name="Miranda M."/>
            <person name="Nguyen M."/>
            <person name="Nierman W.C."/>
            <person name="Osborne B.I."/>
            <person name="Pai G."/>
            <person name="Peterson J."/>
            <person name="Pham P.K."/>
            <person name="Rizzo M."/>
            <person name="Rooney T."/>
            <person name="Rowley D."/>
            <person name="Sakano H."/>
            <person name="Salzberg S.L."/>
            <person name="Schwartz J.R."/>
            <person name="Shinn P."/>
            <person name="Southwick A.M."/>
            <person name="Sun H."/>
            <person name="Tallon L.J."/>
            <person name="Tambunga G."/>
            <person name="Toriumi M.J."/>
            <person name="Town C.D."/>
            <person name="Utterback T."/>
            <person name="Van Aken S."/>
            <person name="Vaysberg M."/>
            <person name="Vysotskaia V.S."/>
            <person name="Walker M."/>
            <person name="Wu D."/>
            <person name="Yu G."/>
            <person name="Fraser C.M."/>
            <person name="Venter J.C."/>
            <person name="Davis R.W."/>
        </authorList>
    </citation>
    <scope>NUCLEOTIDE SEQUENCE [LARGE SCALE GENOMIC DNA]</scope>
    <source>
        <strain>cv. Columbia</strain>
    </source>
</reference>
<reference key="2">
    <citation type="journal article" date="2017" name="Plant J.">
        <title>Araport11: a complete reannotation of the Arabidopsis thaliana reference genome.</title>
        <authorList>
            <person name="Cheng C.Y."/>
            <person name="Krishnakumar V."/>
            <person name="Chan A.P."/>
            <person name="Thibaud-Nissen F."/>
            <person name="Schobel S."/>
            <person name="Town C.D."/>
        </authorList>
    </citation>
    <scope>GENOME REANNOTATION</scope>
    <source>
        <strain>cv. Columbia</strain>
    </source>
</reference>
<reference key="3">
    <citation type="journal article" date="2002" name="Science">
        <title>Functional annotation of a full-length Arabidopsis cDNA collection.</title>
        <authorList>
            <person name="Seki M."/>
            <person name="Narusaka M."/>
            <person name="Kamiya A."/>
            <person name="Ishida J."/>
            <person name="Satou M."/>
            <person name="Sakurai T."/>
            <person name="Nakajima M."/>
            <person name="Enju A."/>
            <person name="Akiyama K."/>
            <person name="Oono Y."/>
            <person name="Muramatsu M."/>
            <person name="Hayashizaki Y."/>
            <person name="Kawai J."/>
            <person name="Carninci P."/>
            <person name="Itoh M."/>
            <person name="Ishii Y."/>
            <person name="Arakawa T."/>
            <person name="Shibata K."/>
            <person name="Shinagawa A."/>
            <person name="Shinozaki K."/>
        </authorList>
    </citation>
    <scope>NUCLEOTIDE SEQUENCE [LARGE SCALE MRNA]</scope>
    <source>
        <strain>cv. Columbia</strain>
    </source>
</reference>
<reference key="4">
    <citation type="submission" date="2006-03" db="EMBL/GenBank/DDBJ databases">
        <title>Arabidopsis ORF clones.</title>
        <authorList>
            <person name="Shinn P."/>
            <person name="Chen H."/>
            <person name="Kim C.J."/>
            <person name="Ecker J.R."/>
        </authorList>
    </citation>
    <scope>NUCLEOTIDE SEQUENCE [LARGE SCALE MRNA]</scope>
    <source>
        <strain>cv. Columbia</strain>
    </source>
</reference>
<reference key="5">
    <citation type="submission" date="2002-03" db="EMBL/GenBank/DDBJ databases">
        <title>Full-length cDNA from Arabidopsis thaliana.</title>
        <authorList>
            <person name="Brover V.V."/>
            <person name="Troukhan M.E."/>
            <person name="Alexandrov N.A."/>
            <person name="Lu Y.-P."/>
            <person name="Flavell R.B."/>
            <person name="Feldmann K.A."/>
        </authorList>
    </citation>
    <scope>NUCLEOTIDE SEQUENCE [LARGE SCALE MRNA]</scope>
</reference>
<reference key="6">
    <citation type="book" date="2001" name="Proceedings of the 12th international conference on Arabidopsis research">
        <title>Genetic and biochemical characterization of UDP sugar 4-epimerases in Arabidopsis thaliana.</title>
        <authorList>
            <person name="Verma R."/>
            <person name="Burget E.G."/>
            <person name="Reiter W.-D."/>
        </authorList>
    </citation>
    <scope>FUNCTION</scope>
</reference>
<reference key="7">
    <citation type="journal article" date="2001" name="Plant Mol. Biol.">
        <title>Molecular genetics of nucleotide sugar interconversion pathways in plants.</title>
        <authorList>
            <person name="Reiter W.-D."/>
            <person name="Vanzin G.F."/>
        </authorList>
    </citation>
    <scope>GENE FAMILY</scope>
</reference>
<reference key="8">
    <citation type="journal article" date="2002" name="Curr. Biol.">
        <title>Galactose biosynthesis in Arabidopsis: genetic evidence for substrate channeling from UDP-D-galactose into cell wall polymers.</title>
        <authorList>
            <person name="Seifert G.J."/>
            <person name="Barber C."/>
            <person name="Wells B."/>
            <person name="Dolan L."/>
            <person name="Roberts K."/>
        </authorList>
    </citation>
    <scope>GENE FAMILY</scope>
    <scope>TISSUE SPECIFICITY</scope>
</reference>
<reference key="9">
    <citation type="journal article" date="2004" name="Plant Cell">
        <title>Growth regulators and the control of nucleotide sugar flux.</title>
        <authorList>
            <person name="Seifert G.J."/>
            <person name="Barber C."/>
            <person name="Wells B."/>
            <person name="Roberts K."/>
        </authorList>
    </citation>
    <scope>INDUCTION</scope>
</reference>
<reference key="10">
    <citation type="journal article" date="2006" name="J. Biol. Chem.">
        <title>Distinct properties of the five UDP-D-glucose/UDP-D-galactose 4-epimerase isoforms of Arabidopsis thaliana.</title>
        <authorList>
            <person name="Barber C."/>
            <person name="Roesti J."/>
            <person name="Rawat A."/>
            <person name="Findlay K."/>
            <person name="Roberts K."/>
            <person name="Seifert G.J."/>
        </authorList>
    </citation>
    <scope>FUNCTION</scope>
    <scope>CATALYTIC ACTIVITY</scope>
    <scope>SUBUNIT</scope>
    <scope>BIOPHYSICOCHEMICAL PROPERTIES</scope>
    <scope>ACTIVITY REGULATION</scope>
    <scope>TISSUE SPECIFICITY</scope>
</reference>
<reference key="11">
    <citation type="journal article" date="2007" name="Plant Cell">
        <title>UDP-glucose 4-epimerase isoforms UGE2 and UGE4 cooperate in providing UDP-galactose for cell wall biosynthesis and growth of Arabidopsis thaliana.</title>
        <authorList>
            <person name="Roesti J."/>
            <person name="Barton C.J."/>
            <person name="Albrecht S."/>
            <person name="Dupree P."/>
            <person name="Pauly M."/>
            <person name="Findlay K."/>
            <person name="Roberts K."/>
            <person name="Seifert G.J."/>
        </authorList>
    </citation>
    <scope>FUNCTION</scope>
    <scope>CATALYTIC ACTIVITY</scope>
    <scope>TISSUE SPECIFICITY</scope>
    <scope>DISRUPTION PHENOTYPE</scope>
</reference>
<reference key="12">
    <citation type="journal article" date="2009" name="Biochem. J.">
        <title>Bifunctional cytosolic UDP-glucose 4-epimerases catalyse the interconversion between UDP-D-xylose and UDP-L-arabinose in plants.</title>
        <authorList>
            <person name="Kotake T."/>
            <person name="Takata R."/>
            <person name="Verma R."/>
            <person name="Takaba M."/>
            <person name="Yamaguchi D."/>
            <person name="Orita T."/>
            <person name="Kaneko S."/>
            <person name="Matsuoka K."/>
            <person name="Koyama T."/>
            <person name="Reiter W.D."/>
            <person name="Tsumuraya Y."/>
        </authorList>
    </citation>
    <scope>FUNCTION</scope>
    <scope>CATALYTIC ACTIVITY</scope>
    <scope>BIOPHYSICOCHEMICAL PROPERTIES</scope>
</reference>
<dbReference type="EC" id="5.1.3.2" evidence="10 11 12"/>
<dbReference type="EC" id="5.1.3.5" evidence="6"/>
<dbReference type="EMBL" id="AC010795">
    <property type="protein sequence ID" value="AAG51599.1"/>
    <property type="status" value="ALT_SEQ"/>
    <property type="molecule type" value="Genomic_DNA"/>
</dbReference>
<dbReference type="EMBL" id="CP002684">
    <property type="protein sequence ID" value="AEE34065.1"/>
    <property type="molecule type" value="Genomic_DNA"/>
</dbReference>
<dbReference type="EMBL" id="AK117913">
    <property type="protein sequence ID" value="BAC42551.1"/>
    <property type="molecule type" value="mRNA"/>
</dbReference>
<dbReference type="EMBL" id="BT024882">
    <property type="protein sequence ID" value="ABD85153.1"/>
    <property type="molecule type" value="mRNA"/>
</dbReference>
<dbReference type="EMBL" id="AY085887">
    <property type="protein sequence ID" value="AAM63099.1"/>
    <property type="molecule type" value="mRNA"/>
</dbReference>
<dbReference type="PIR" id="D96657">
    <property type="entry name" value="D96657"/>
</dbReference>
<dbReference type="RefSeq" id="NP_564811.1">
    <property type="nucleotide sequence ID" value="NM_104996.6"/>
</dbReference>
<dbReference type="SMR" id="Q8LDN8"/>
<dbReference type="BioGRID" id="27843">
    <property type="interactions" value="1"/>
</dbReference>
<dbReference type="FunCoup" id="Q8LDN8">
    <property type="interactions" value="802"/>
</dbReference>
<dbReference type="STRING" id="3702.Q8LDN8"/>
<dbReference type="PaxDb" id="3702-AT1G63180.1"/>
<dbReference type="ProteomicsDB" id="245260"/>
<dbReference type="EnsemblPlants" id="AT1G63180.1">
    <property type="protein sequence ID" value="AT1G63180.1"/>
    <property type="gene ID" value="AT1G63180"/>
</dbReference>
<dbReference type="GeneID" id="842622"/>
<dbReference type="Gramene" id="AT1G63180.1">
    <property type="protein sequence ID" value="AT1G63180.1"/>
    <property type="gene ID" value="AT1G63180"/>
</dbReference>
<dbReference type="KEGG" id="ath:AT1G63180"/>
<dbReference type="Araport" id="AT1G63180"/>
<dbReference type="TAIR" id="AT1G63180">
    <property type="gene designation" value="UGE3"/>
</dbReference>
<dbReference type="eggNOG" id="KOG1371">
    <property type="taxonomic scope" value="Eukaryota"/>
</dbReference>
<dbReference type="HOGENOM" id="CLU_007383_1_10_1"/>
<dbReference type="InParanoid" id="Q8LDN8"/>
<dbReference type="OMA" id="RDACEDI"/>
<dbReference type="OrthoDB" id="9402762at2759"/>
<dbReference type="PhylomeDB" id="Q8LDN8"/>
<dbReference type="BRENDA" id="5.1.3.2">
    <property type="organism ID" value="399"/>
</dbReference>
<dbReference type="BRENDA" id="5.1.3.5">
    <property type="organism ID" value="399"/>
</dbReference>
<dbReference type="SABIO-RK" id="Q8LDN8"/>
<dbReference type="UniPathway" id="UPA00214"/>
<dbReference type="UniPathway" id="UPA00797">
    <property type="reaction ID" value="UER00772"/>
</dbReference>
<dbReference type="UniPathway" id="UPA00963"/>
<dbReference type="PRO" id="PR:Q8LDN8"/>
<dbReference type="Proteomes" id="UP000006548">
    <property type="component" value="Chromosome 1"/>
</dbReference>
<dbReference type="ExpressionAtlas" id="Q8LDN8">
    <property type="expression patterns" value="baseline and differential"/>
</dbReference>
<dbReference type="GO" id="GO:0046983">
    <property type="term" value="F:protein dimerization activity"/>
    <property type="evidence" value="ECO:0000353"/>
    <property type="project" value="TAIR"/>
</dbReference>
<dbReference type="GO" id="GO:0050373">
    <property type="term" value="F:UDP-arabinose 4-epimerase activity"/>
    <property type="evidence" value="ECO:0000314"/>
    <property type="project" value="UniProtKB"/>
</dbReference>
<dbReference type="GO" id="GO:0003978">
    <property type="term" value="F:UDP-glucose 4-epimerase activity"/>
    <property type="evidence" value="ECO:0000314"/>
    <property type="project" value="TAIR"/>
</dbReference>
<dbReference type="GO" id="GO:0045227">
    <property type="term" value="P:capsule polysaccharide biosynthetic process"/>
    <property type="evidence" value="ECO:0007669"/>
    <property type="project" value="UniProtKB-UniPathway"/>
</dbReference>
<dbReference type="GO" id="GO:0071555">
    <property type="term" value="P:cell wall organization"/>
    <property type="evidence" value="ECO:0007669"/>
    <property type="project" value="UniProtKB-KW"/>
</dbReference>
<dbReference type="GO" id="GO:0006012">
    <property type="term" value="P:galactose metabolic process"/>
    <property type="evidence" value="ECO:0007669"/>
    <property type="project" value="UniProtKB-UniPathway"/>
</dbReference>
<dbReference type="GO" id="GO:0009555">
    <property type="term" value="P:pollen development"/>
    <property type="evidence" value="ECO:0000315"/>
    <property type="project" value="TAIR"/>
</dbReference>
<dbReference type="GO" id="GO:0033358">
    <property type="term" value="P:UDP-L-arabinose biosynthetic process"/>
    <property type="evidence" value="ECO:0007669"/>
    <property type="project" value="UniProtKB-UniPathway"/>
</dbReference>
<dbReference type="CDD" id="cd05247">
    <property type="entry name" value="UDP_G4E_1_SDR_e"/>
    <property type="match status" value="1"/>
</dbReference>
<dbReference type="FunFam" id="3.40.50.720:FF:000040">
    <property type="entry name" value="UDP-glucose 4-epimerase"/>
    <property type="match status" value="1"/>
</dbReference>
<dbReference type="FunFam" id="3.90.25.10:FF:000060">
    <property type="entry name" value="UDP-glucose 4-epimerase 4"/>
    <property type="match status" value="1"/>
</dbReference>
<dbReference type="Gene3D" id="3.40.50.720">
    <property type="entry name" value="NAD(P)-binding Rossmann-like Domain"/>
    <property type="match status" value="1"/>
</dbReference>
<dbReference type="Gene3D" id="3.90.25.10">
    <property type="entry name" value="UDP-galactose 4-epimerase, domain 1"/>
    <property type="match status" value="1"/>
</dbReference>
<dbReference type="InterPro" id="IPR016040">
    <property type="entry name" value="NAD(P)-bd_dom"/>
</dbReference>
<dbReference type="InterPro" id="IPR036291">
    <property type="entry name" value="NAD(P)-bd_dom_sf"/>
</dbReference>
<dbReference type="InterPro" id="IPR005886">
    <property type="entry name" value="UDP_G4E"/>
</dbReference>
<dbReference type="NCBIfam" id="TIGR01179">
    <property type="entry name" value="galE"/>
    <property type="match status" value="1"/>
</dbReference>
<dbReference type="NCBIfam" id="NF007956">
    <property type="entry name" value="PRK10675.1"/>
    <property type="match status" value="1"/>
</dbReference>
<dbReference type="PANTHER" id="PTHR43725:SF24">
    <property type="entry name" value="BIFUNCTIONAL UDP-GLUCOSE 4-EPIMERASE AND UDP-XYLOSE 4-EPIMERASE 3"/>
    <property type="match status" value="1"/>
</dbReference>
<dbReference type="PANTHER" id="PTHR43725">
    <property type="entry name" value="UDP-GLUCOSE 4-EPIMERASE"/>
    <property type="match status" value="1"/>
</dbReference>
<dbReference type="Pfam" id="PF16363">
    <property type="entry name" value="GDP_Man_Dehyd"/>
    <property type="match status" value="1"/>
</dbReference>
<dbReference type="SUPFAM" id="SSF51735">
    <property type="entry name" value="NAD(P)-binding Rossmann-fold domains"/>
    <property type="match status" value="1"/>
</dbReference>
<name>UGE3_ARATH</name>
<gene>
    <name type="primary">UGE3</name>
    <name type="ordered locus">At1g63180</name>
    <name type="ORF">F16M19.8</name>
</gene>
<accession>Q8LDN8</accession>
<accession>Q9CAM5</accession>
<comment type="function">
    <text evidence="4 5 6 7 10">Catalyzes the interconversion between UDP-glucose and UDP-galactose and the interconversion between UDP-arabinose and UDP-xylose. Cooperates with UGE2 in pollen development. May preferentially act in the UDP-galactose to UDP-glucose direction, therefore displaying a role in carbohydrate catabolism (Probable).</text>
</comment>
<comment type="catalytic activity">
    <reaction evidence="10 11 12">
        <text>UDP-alpha-D-glucose = UDP-alpha-D-galactose</text>
        <dbReference type="Rhea" id="RHEA:22168"/>
        <dbReference type="ChEBI" id="CHEBI:58885"/>
        <dbReference type="ChEBI" id="CHEBI:66914"/>
        <dbReference type="EC" id="5.1.3.2"/>
    </reaction>
</comment>
<comment type="catalytic activity">
    <reaction evidence="6">
        <text>UDP-beta-L-arabinopyranose = UDP-alpha-D-xylose</text>
        <dbReference type="Rhea" id="RHEA:11320"/>
        <dbReference type="ChEBI" id="CHEBI:57632"/>
        <dbReference type="ChEBI" id="CHEBI:61457"/>
        <dbReference type="EC" id="5.1.3.5"/>
    </reaction>
</comment>
<comment type="cofactor">
    <cofactor evidence="1">
        <name>NAD(+)</name>
        <dbReference type="ChEBI" id="CHEBI:57540"/>
    </cofactor>
</comment>
<comment type="activity regulation">
    <text evidence="4">Strongly inhibited by UDP.</text>
</comment>
<comment type="biophysicochemical properties">
    <kinetics>
        <KM evidence="4">0.19 mM for UDP-glucose</KM>
        <KM evidence="4">0.19 mM for UDP-galactose</KM>
        <KM evidence="4">0.22 mM for UDP-galactose</KM>
        <KM evidence="6">0.068 mM for UDP-galactose</KM>
        <KM evidence="6">0.32 mM for UDP-xylose</KM>
        <text evidence="4 6">kcat is 19 sec(-1) with UDP-glucose as substrate (PubMed:16644739). kcat is 42 sec(-1) with UDP-galactose as substrate (PubMed:16644739). kcat is 57 sec(-1) with UDP-galactose as substrate (PubMed:16644739). kcat is 66 sec(-1) with UDP-galactose as substrate (PubMed:16644739). kcat is 27 sec(-1) with UDP-galactose as substrate (PubMed:19754426). kcat is 13 sec(-1) with UDP-xylose as substrate (PubMed:19754426).</text>
    </kinetics>
    <phDependence>
        <text evidence="4 6">Optimum pH is 7.0-9.0.</text>
    </phDependence>
    <temperatureDependence>
        <text evidence="4 6">Optimum temperature is 35 degrees Celsius.</text>
    </temperatureDependence>
</comment>
<comment type="pathway">
    <text>Carbohydrate metabolism; galactose metabolism.</text>
</comment>
<comment type="pathway">
    <text>Nucleotide-sugar biosynthesis; UDP-L-arabinose biosynthesis; UDP-L-arabinose from UDP-alpha-D-xylose: step 1/1.</text>
</comment>
<comment type="pathway">
    <text>Cell wall biogenesis; cell wall polysaccharide biosynthesis.</text>
</comment>
<comment type="subunit">
    <text evidence="4">homodimer. Heterodimer.</text>
</comment>
<comment type="tissue specificity">
    <text evidence="2 4 5">Ubiquitous.</text>
</comment>
<comment type="induction">
    <text evidence="3">Down-regulated by ethylene.</text>
</comment>
<comment type="disruption phenotype">
    <text evidence="5">No visible phenotype. Uge2 and uge3 double mutant is almost completely sterile (PubMed:17496119).</text>
</comment>
<comment type="similarity">
    <text evidence="9">Belongs to the NAD(P)-dependent epimerase/dehydratase family.</text>
</comment>
<comment type="sequence caution" evidence="9">
    <conflict type="erroneous gene model prediction">
        <sequence resource="EMBL-CDS" id="AAG51599"/>
    </conflict>
</comment>
<evidence type="ECO:0000250" key="1"/>
<evidence type="ECO:0000269" key="2">
    <source>
    </source>
</evidence>
<evidence type="ECO:0000269" key="3">
    <source>
    </source>
</evidence>
<evidence type="ECO:0000269" key="4">
    <source>
    </source>
</evidence>
<evidence type="ECO:0000269" key="5">
    <source>
    </source>
</evidence>
<evidence type="ECO:0000269" key="6">
    <source>
    </source>
</evidence>
<evidence type="ECO:0000269" key="7">
    <source ref="6"/>
</evidence>
<evidence type="ECO:0000303" key="8">
    <source>
    </source>
</evidence>
<evidence type="ECO:0000305" key="9"/>
<evidence type="ECO:0000305" key="10">
    <source>
    </source>
</evidence>
<evidence type="ECO:0000305" key="11">
    <source>
    </source>
</evidence>
<evidence type="ECO:0000305" key="12">
    <source>
    </source>
</evidence>
<keyword id="KW-0119">Carbohydrate metabolism</keyword>
<keyword id="KW-0961">Cell wall biogenesis/degradation</keyword>
<keyword id="KW-0299">Galactose metabolism</keyword>
<keyword id="KW-0413">Isomerase</keyword>
<keyword id="KW-0520">NAD</keyword>
<keyword id="KW-1185">Reference proteome</keyword>
<protein>
    <recommendedName>
        <fullName>Bifunctional UDP-glucose 4-epimerase and UDP-xylose 4-epimerase 3</fullName>
        <ecNumber evidence="10 11 12">5.1.3.2</ecNumber>
        <ecNumber evidence="6">5.1.3.5</ecNumber>
    </recommendedName>
    <alternativeName>
        <fullName>UDP-D-xylose 4-epimerase</fullName>
    </alternativeName>
    <alternativeName>
        <fullName>UDP-L-arabinose 4-epimerase</fullName>
    </alternativeName>
    <alternativeName>
        <fullName>UDP-galactose 4-epimerase 3</fullName>
    </alternativeName>
    <alternativeName>
        <fullName>UDP-glucose 4-epimerase 3</fullName>
        <shortName evidence="8">AtUGE3</shortName>
    </alternativeName>
</protein>
<proteinExistence type="evidence at protein level"/>
<feature type="chain" id="PRO_0000422185" description="Bifunctional UDP-glucose 4-epimerase and UDP-xylose 4-epimerase 3">
    <location>
        <begin position="1"/>
        <end position="351"/>
    </location>
</feature>
<feature type="active site" description="Proton acceptor" evidence="1">
    <location>
        <position position="158"/>
    </location>
</feature>
<feature type="binding site" evidence="1">
    <location>
        <begin position="8"/>
        <end position="39"/>
    </location>
    <ligand>
        <name>NAD(+)</name>
        <dbReference type="ChEBI" id="CHEBI:57540"/>
    </ligand>
</feature>
<feature type="binding site" evidence="1">
    <location>
        <position position="134"/>
    </location>
    <ligand>
        <name>substrate</name>
    </ligand>
</feature>
<organism>
    <name type="scientific">Arabidopsis thaliana</name>
    <name type="common">Mouse-ear cress</name>
    <dbReference type="NCBI Taxonomy" id="3702"/>
    <lineage>
        <taxon>Eukaryota</taxon>
        <taxon>Viridiplantae</taxon>
        <taxon>Streptophyta</taxon>
        <taxon>Embryophyta</taxon>
        <taxon>Tracheophyta</taxon>
        <taxon>Spermatophyta</taxon>
        <taxon>Magnoliopsida</taxon>
        <taxon>eudicotyledons</taxon>
        <taxon>Gunneridae</taxon>
        <taxon>Pentapetalae</taxon>
        <taxon>rosids</taxon>
        <taxon>malvids</taxon>
        <taxon>Brassicales</taxon>
        <taxon>Brassicaceae</taxon>
        <taxon>Camelineae</taxon>
        <taxon>Arabidopsis</taxon>
    </lineage>
</organism>
<sequence>MGSSVEQNILVTGGAGFIGTHTVVQLLNQGFKVTIIDNLDNSVVEAVHRVRELVGPDLSTKLEFNLGDLRNKGDIEKLFSNQRFDAVIHFAGLKAVGESVGNPRRYFDNNLVGTINLYETMAKYNCKMMVFSSSATVYGQPEIVPCVEDFELQAMNPYGRTKLFLEEIARDIHAAEPEWKIILLRYFNPVGAHESGRIGEDPKGIPNNLMPYIQQVAVGRLPELNVFGHDYPTMDGSAVRDYIHVMDLADGHVAALNKLFSDSKIGCTAYNLGTGQGTSVLEMVSSFEKASGKKIPIKLCPRRAGDATAVYASTQKAEKELGWKAKYGVDEMCRDQWNWANKNPWGFQKKP</sequence>